<organism>
    <name type="scientific">Staphylococcus aureus (strain USA300 / TCH1516)</name>
    <dbReference type="NCBI Taxonomy" id="451516"/>
    <lineage>
        <taxon>Bacteria</taxon>
        <taxon>Bacillati</taxon>
        <taxon>Bacillota</taxon>
        <taxon>Bacilli</taxon>
        <taxon>Bacillales</taxon>
        <taxon>Staphylococcaceae</taxon>
        <taxon>Staphylococcus</taxon>
    </lineage>
</organism>
<sequence length="204" mass="22597">MLRIAIAKGRLMDSLINYLDVIEYTTLSETLKNRERQLLLSVDNIECILVKGSDVPIYVEQGMADIGIVGSDILDERQYNVNNLLNMPFGACHFAVAAKPETTNYRKIATSYVHTAETYFKSKGIDVELIKLNGSVELAGVVDMVDGIVDIVQTGTTLKANGLVEKQHISDINARLITNKAAYFKKSQLIEQFIRSLEVSIANA</sequence>
<gene>
    <name evidence="1" type="primary">hisG</name>
    <name type="ordered locus">USA300HOU_2680</name>
</gene>
<evidence type="ECO:0000255" key="1">
    <source>
        <dbReference type="HAMAP-Rule" id="MF_01018"/>
    </source>
</evidence>
<feature type="chain" id="PRO_1000084163" description="ATP phosphoribosyltransferase">
    <location>
        <begin position="1"/>
        <end position="204"/>
    </location>
</feature>
<dbReference type="EC" id="2.4.2.17" evidence="1"/>
<dbReference type="EMBL" id="CP000730">
    <property type="protein sequence ID" value="ABX30666.1"/>
    <property type="molecule type" value="Genomic_DNA"/>
</dbReference>
<dbReference type="RefSeq" id="WP_000944150.1">
    <property type="nucleotide sequence ID" value="NC_010079.1"/>
</dbReference>
<dbReference type="SMR" id="A8Z5H9"/>
<dbReference type="KEGG" id="sax:USA300HOU_2680"/>
<dbReference type="HOGENOM" id="CLU_038115_2_0_9"/>
<dbReference type="UniPathway" id="UPA00031">
    <property type="reaction ID" value="UER00006"/>
</dbReference>
<dbReference type="GO" id="GO:0005737">
    <property type="term" value="C:cytoplasm"/>
    <property type="evidence" value="ECO:0007669"/>
    <property type="project" value="UniProtKB-SubCell"/>
</dbReference>
<dbReference type="GO" id="GO:0005524">
    <property type="term" value="F:ATP binding"/>
    <property type="evidence" value="ECO:0007669"/>
    <property type="project" value="UniProtKB-KW"/>
</dbReference>
<dbReference type="GO" id="GO:0003879">
    <property type="term" value="F:ATP phosphoribosyltransferase activity"/>
    <property type="evidence" value="ECO:0007669"/>
    <property type="project" value="UniProtKB-UniRule"/>
</dbReference>
<dbReference type="GO" id="GO:0000105">
    <property type="term" value="P:L-histidine biosynthetic process"/>
    <property type="evidence" value="ECO:0007669"/>
    <property type="project" value="UniProtKB-UniRule"/>
</dbReference>
<dbReference type="CDD" id="cd13595">
    <property type="entry name" value="PBP2_HisGs"/>
    <property type="match status" value="1"/>
</dbReference>
<dbReference type="FunFam" id="3.40.190.10:FF:000008">
    <property type="entry name" value="ATP phosphoribosyltransferase"/>
    <property type="match status" value="1"/>
</dbReference>
<dbReference type="Gene3D" id="3.40.190.10">
    <property type="entry name" value="Periplasmic binding protein-like II"/>
    <property type="match status" value="2"/>
</dbReference>
<dbReference type="HAMAP" id="MF_01018">
    <property type="entry name" value="HisG_Short"/>
    <property type="match status" value="1"/>
</dbReference>
<dbReference type="InterPro" id="IPR013820">
    <property type="entry name" value="ATP_PRibTrfase_cat"/>
</dbReference>
<dbReference type="InterPro" id="IPR001348">
    <property type="entry name" value="ATP_PRibTrfase_HisG"/>
</dbReference>
<dbReference type="InterPro" id="IPR024893">
    <property type="entry name" value="ATP_PRibTrfase_HisG_short"/>
</dbReference>
<dbReference type="NCBIfam" id="TIGR00070">
    <property type="entry name" value="hisG"/>
    <property type="match status" value="1"/>
</dbReference>
<dbReference type="PANTHER" id="PTHR21403:SF8">
    <property type="entry name" value="ATP PHOSPHORIBOSYLTRANSFERASE"/>
    <property type="match status" value="1"/>
</dbReference>
<dbReference type="PANTHER" id="PTHR21403">
    <property type="entry name" value="ATP PHOSPHORIBOSYLTRANSFERASE ATP-PRTASE"/>
    <property type="match status" value="1"/>
</dbReference>
<dbReference type="Pfam" id="PF01634">
    <property type="entry name" value="HisG"/>
    <property type="match status" value="1"/>
</dbReference>
<dbReference type="SUPFAM" id="SSF53850">
    <property type="entry name" value="Periplasmic binding protein-like II"/>
    <property type="match status" value="1"/>
</dbReference>
<reference key="1">
    <citation type="journal article" date="2007" name="BMC Microbiol.">
        <title>Subtle genetic changes enhance virulence of methicillin resistant and sensitive Staphylococcus aureus.</title>
        <authorList>
            <person name="Highlander S.K."/>
            <person name="Hulten K.G."/>
            <person name="Qin X."/>
            <person name="Jiang H."/>
            <person name="Yerrapragada S."/>
            <person name="Mason E.O. Jr."/>
            <person name="Shang Y."/>
            <person name="Williams T.M."/>
            <person name="Fortunov R.M."/>
            <person name="Liu Y."/>
            <person name="Igboeli O."/>
            <person name="Petrosino J."/>
            <person name="Tirumalai M."/>
            <person name="Uzman A."/>
            <person name="Fox G.E."/>
            <person name="Cardenas A.M."/>
            <person name="Muzny D.M."/>
            <person name="Hemphill L."/>
            <person name="Ding Y."/>
            <person name="Dugan S."/>
            <person name="Blyth P.R."/>
            <person name="Buhay C.J."/>
            <person name="Dinh H.H."/>
            <person name="Hawes A.C."/>
            <person name="Holder M."/>
            <person name="Kovar C.L."/>
            <person name="Lee S.L."/>
            <person name="Liu W."/>
            <person name="Nazareth L.V."/>
            <person name="Wang Q."/>
            <person name="Zhou J."/>
            <person name="Kaplan S.L."/>
            <person name="Weinstock G.M."/>
        </authorList>
    </citation>
    <scope>NUCLEOTIDE SEQUENCE [LARGE SCALE GENOMIC DNA]</scope>
    <source>
        <strain>USA300 / TCH1516</strain>
    </source>
</reference>
<accession>A8Z5H9</accession>
<name>HIS1_STAAT</name>
<keyword id="KW-0028">Amino-acid biosynthesis</keyword>
<keyword id="KW-0067">ATP-binding</keyword>
<keyword id="KW-0963">Cytoplasm</keyword>
<keyword id="KW-0328">Glycosyltransferase</keyword>
<keyword id="KW-0368">Histidine biosynthesis</keyword>
<keyword id="KW-0547">Nucleotide-binding</keyword>
<keyword id="KW-0808">Transferase</keyword>
<comment type="function">
    <text evidence="1">Catalyzes the condensation of ATP and 5-phosphoribose 1-diphosphate to form N'-(5'-phosphoribosyl)-ATP (PR-ATP). Has a crucial role in the pathway because the rate of histidine biosynthesis seems to be controlled primarily by regulation of HisG enzymatic activity.</text>
</comment>
<comment type="catalytic activity">
    <reaction evidence="1">
        <text>1-(5-phospho-beta-D-ribosyl)-ATP + diphosphate = 5-phospho-alpha-D-ribose 1-diphosphate + ATP</text>
        <dbReference type="Rhea" id="RHEA:18473"/>
        <dbReference type="ChEBI" id="CHEBI:30616"/>
        <dbReference type="ChEBI" id="CHEBI:33019"/>
        <dbReference type="ChEBI" id="CHEBI:58017"/>
        <dbReference type="ChEBI" id="CHEBI:73183"/>
        <dbReference type="EC" id="2.4.2.17"/>
    </reaction>
</comment>
<comment type="pathway">
    <text evidence="1">Amino-acid biosynthesis; L-histidine biosynthesis; L-histidine from 5-phospho-alpha-D-ribose 1-diphosphate: step 1/9.</text>
</comment>
<comment type="subunit">
    <text evidence="1">Heteromultimer composed of HisG and HisZ subunits.</text>
</comment>
<comment type="subcellular location">
    <subcellularLocation>
        <location evidence="1">Cytoplasm</location>
    </subcellularLocation>
</comment>
<comment type="domain">
    <text>Lacks the C-terminal regulatory region which is replaced by HisZ.</text>
</comment>
<comment type="similarity">
    <text evidence="1">Belongs to the ATP phosphoribosyltransferase family. Short subfamily.</text>
</comment>
<proteinExistence type="inferred from homology"/>
<protein>
    <recommendedName>
        <fullName evidence="1">ATP phosphoribosyltransferase</fullName>
        <shortName evidence="1">ATP-PRT</shortName>
        <shortName evidence="1">ATP-PRTase</shortName>
        <ecNumber evidence="1">2.4.2.17</ecNumber>
    </recommendedName>
</protein>